<dbReference type="EC" id="5.4.3.8" evidence="1"/>
<dbReference type="EMBL" id="CP000518">
    <property type="protein sequence ID" value="ABL89919.1"/>
    <property type="molecule type" value="Genomic_DNA"/>
</dbReference>
<dbReference type="SMR" id="A1UAR1"/>
<dbReference type="STRING" id="189918.Mkms_0703"/>
<dbReference type="KEGG" id="mkm:Mkms_0703"/>
<dbReference type="HOGENOM" id="CLU_016922_1_5_11"/>
<dbReference type="OrthoDB" id="9801052at2"/>
<dbReference type="UniPathway" id="UPA00251">
    <property type="reaction ID" value="UER00317"/>
</dbReference>
<dbReference type="GO" id="GO:0005737">
    <property type="term" value="C:cytoplasm"/>
    <property type="evidence" value="ECO:0007669"/>
    <property type="project" value="UniProtKB-SubCell"/>
</dbReference>
<dbReference type="GO" id="GO:0042286">
    <property type="term" value="F:glutamate-1-semialdehyde 2,1-aminomutase activity"/>
    <property type="evidence" value="ECO:0007669"/>
    <property type="project" value="UniProtKB-UniRule"/>
</dbReference>
<dbReference type="GO" id="GO:0030170">
    <property type="term" value="F:pyridoxal phosphate binding"/>
    <property type="evidence" value="ECO:0007669"/>
    <property type="project" value="InterPro"/>
</dbReference>
<dbReference type="GO" id="GO:0008483">
    <property type="term" value="F:transaminase activity"/>
    <property type="evidence" value="ECO:0007669"/>
    <property type="project" value="InterPro"/>
</dbReference>
<dbReference type="GO" id="GO:0006782">
    <property type="term" value="P:protoporphyrinogen IX biosynthetic process"/>
    <property type="evidence" value="ECO:0007669"/>
    <property type="project" value="UniProtKB-UniRule"/>
</dbReference>
<dbReference type="CDD" id="cd00610">
    <property type="entry name" value="OAT_like"/>
    <property type="match status" value="1"/>
</dbReference>
<dbReference type="FunFam" id="3.40.640.10:FF:000021">
    <property type="entry name" value="Glutamate-1-semialdehyde 2,1-aminomutase"/>
    <property type="match status" value="1"/>
</dbReference>
<dbReference type="Gene3D" id="3.90.1150.10">
    <property type="entry name" value="Aspartate Aminotransferase, domain 1"/>
    <property type="match status" value="1"/>
</dbReference>
<dbReference type="Gene3D" id="3.40.640.10">
    <property type="entry name" value="Type I PLP-dependent aspartate aminotransferase-like (Major domain)"/>
    <property type="match status" value="1"/>
</dbReference>
<dbReference type="HAMAP" id="MF_00375">
    <property type="entry name" value="HemL_aminotrans_3"/>
    <property type="match status" value="1"/>
</dbReference>
<dbReference type="InterPro" id="IPR004639">
    <property type="entry name" value="4pyrrol_synth_GluAld_NH2Trfase"/>
</dbReference>
<dbReference type="InterPro" id="IPR005814">
    <property type="entry name" value="Aminotrans_3"/>
</dbReference>
<dbReference type="InterPro" id="IPR049704">
    <property type="entry name" value="Aminotrans_3_PPA_site"/>
</dbReference>
<dbReference type="InterPro" id="IPR015424">
    <property type="entry name" value="PyrdxlP-dep_Trfase"/>
</dbReference>
<dbReference type="InterPro" id="IPR015421">
    <property type="entry name" value="PyrdxlP-dep_Trfase_major"/>
</dbReference>
<dbReference type="InterPro" id="IPR015422">
    <property type="entry name" value="PyrdxlP-dep_Trfase_small"/>
</dbReference>
<dbReference type="NCBIfam" id="TIGR00713">
    <property type="entry name" value="hemL"/>
    <property type="match status" value="1"/>
</dbReference>
<dbReference type="NCBIfam" id="NF000818">
    <property type="entry name" value="PRK00062.1"/>
    <property type="match status" value="1"/>
</dbReference>
<dbReference type="PANTHER" id="PTHR43713">
    <property type="entry name" value="GLUTAMATE-1-SEMIALDEHYDE 2,1-AMINOMUTASE"/>
    <property type="match status" value="1"/>
</dbReference>
<dbReference type="PANTHER" id="PTHR43713:SF3">
    <property type="entry name" value="GLUTAMATE-1-SEMIALDEHYDE 2,1-AMINOMUTASE 1, CHLOROPLASTIC-RELATED"/>
    <property type="match status" value="1"/>
</dbReference>
<dbReference type="Pfam" id="PF00202">
    <property type="entry name" value="Aminotran_3"/>
    <property type="match status" value="1"/>
</dbReference>
<dbReference type="SUPFAM" id="SSF53383">
    <property type="entry name" value="PLP-dependent transferases"/>
    <property type="match status" value="1"/>
</dbReference>
<dbReference type="PROSITE" id="PS00600">
    <property type="entry name" value="AA_TRANSFER_CLASS_3"/>
    <property type="match status" value="1"/>
</dbReference>
<keyword id="KW-0963">Cytoplasm</keyword>
<keyword id="KW-0413">Isomerase</keyword>
<keyword id="KW-0627">Porphyrin biosynthesis</keyword>
<keyword id="KW-0663">Pyridoxal phosphate</keyword>
<proteinExistence type="inferred from homology"/>
<gene>
    <name evidence="1" type="primary">hemL</name>
    <name type="ordered locus">Mkms_0703</name>
</gene>
<evidence type="ECO:0000255" key="1">
    <source>
        <dbReference type="HAMAP-Rule" id="MF_00375"/>
    </source>
</evidence>
<sequence>MGAHHTATEQSARLFADACAVIPGGVNSPVRAFNAVGGTPRFITSANGYWLTDADDNRYVDLVCSWGPMILGHAHPAVVEAVQRVAADGLSFGAPTPSETELASEIISRVAPVERLRMVNSGTEATMSAIRLARGFTGRPKIVKFSGCYHGHSDALLADAGSGVATLGLPSSPGVTGAATADTIVLPYNDVDAVEEIFEQVGDQIAAVITEASPGNMGAVPPEPGFNAALRRITEEHGALLILDEVMTGFRVSRSGWYGLDPVDGDLFTFGKVMSGGLPAAAFGGRAEVMERLAPLGPVYQAGTLSGNPVAMAAGLATLRTADDAVYAALDKNADRLAGLLTDALTDAGVTHRVQRGGNMLSVFFTAEPVGDFATARASETWRFPPFFHALLDAGVYPPPSAFEAWFVSAALDDEAFDRIAAALPGAARAAAEASRPA</sequence>
<accession>A1UAR1</accession>
<feature type="chain" id="PRO_0000382348" description="Glutamate-1-semialdehyde 2,1-aminomutase">
    <location>
        <begin position="1"/>
        <end position="438"/>
    </location>
</feature>
<feature type="modified residue" description="N6-(pyridoxal phosphate)lysine" evidence="1">
    <location>
        <position position="272"/>
    </location>
</feature>
<reference key="1">
    <citation type="submission" date="2006-12" db="EMBL/GenBank/DDBJ databases">
        <title>Complete sequence of chromosome of Mycobacterium sp. KMS.</title>
        <authorList>
            <consortium name="US DOE Joint Genome Institute"/>
            <person name="Copeland A."/>
            <person name="Lucas S."/>
            <person name="Lapidus A."/>
            <person name="Barry K."/>
            <person name="Detter J.C."/>
            <person name="Glavina del Rio T."/>
            <person name="Hammon N."/>
            <person name="Israni S."/>
            <person name="Dalin E."/>
            <person name="Tice H."/>
            <person name="Pitluck S."/>
            <person name="Kiss H."/>
            <person name="Brettin T."/>
            <person name="Bruce D."/>
            <person name="Han C."/>
            <person name="Tapia R."/>
            <person name="Gilna P."/>
            <person name="Schmutz J."/>
            <person name="Larimer F."/>
            <person name="Land M."/>
            <person name="Hauser L."/>
            <person name="Kyrpides N."/>
            <person name="Mikhailova N."/>
            <person name="Miller C.D."/>
            <person name="Richardson P."/>
        </authorList>
    </citation>
    <scope>NUCLEOTIDE SEQUENCE [LARGE SCALE GENOMIC DNA]</scope>
    <source>
        <strain>KMS</strain>
    </source>
</reference>
<name>GSA_MYCSK</name>
<organism>
    <name type="scientific">Mycobacterium sp. (strain KMS)</name>
    <dbReference type="NCBI Taxonomy" id="189918"/>
    <lineage>
        <taxon>Bacteria</taxon>
        <taxon>Bacillati</taxon>
        <taxon>Actinomycetota</taxon>
        <taxon>Actinomycetes</taxon>
        <taxon>Mycobacteriales</taxon>
        <taxon>Mycobacteriaceae</taxon>
        <taxon>Mycobacterium</taxon>
    </lineage>
</organism>
<protein>
    <recommendedName>
        <fullName evidence="1">Glutamate-1-semialdehyde 2,1-aminomutase</fullName>
        <shortName evidence="1">GSA</shortName>
        <ecNumber evidence="1">5.4.3.8</ecNumber>
    </recommendedName>
    <alternativeName>
        <fullName evidence="1">Glutamate-1-semialdehyde aminotransferase</fullName>
        <shortName evidence="1">GSA-AT</shortName>
    </alternativeName>
</protein>
<comment type="catalytic activity">
    <reaction evidence="1">
        <text>(S)-4-amino-5-oxopentanoate = 5-aminolevulinate</text>
        <dbReference type="Rhea" id="RHEA:14265"/>
        <dbReference type="ChEBI" id="CHEBI:57501"/>
        <dbReference type="ChEBI" id="CHEBI:356416"/>
        <dbReference type="EC" id="5.4.3.8"/>
    </reaction>
</comment>
<comment type="cofactor">
    <cofactor evidence="1">
        <name>pyridoxal 5'-phosphate</name>
        <dbReference type="ChEBI" id="CHEBI:597326"/>
    </cofactor>
</comment>
<comment type="pathway">
    <text evidence="1">Porphyrin-containing compound metabolism; protoporphyrin-IX biosynthesis; 5-aminolevulinate from L-glutamyl-tRNA(Glu): step 2/2.</text>
</comment>
<comment type="subunit">
    <text evidence="1">Homodimer.</text>
</comment>
<comment type="subcellular location">
    <subcellularLocation>
        <location evidence="1">Cytoplasm</location>
    </subcellularLocation>
</comment>
<comment type="similarity">
    <text evidence="1">Belongs to the class-III pyridoxal-phosphate-dependent aminotransferase family. HemL subfamily.</text>
</comment>